<reference key="1">
    <citation type="journal article" date="1996" name="DNA Res.">
        <title>A 718-kb DNA sequence of the Escherichia coli K-12 genome corresponding to the 12.7-28.0 min region on the linkage map.</title>
        <authorList>
            <person name="Oshima T."/>
            <person name="Aiba H."/>
            <person name="Baba T."/>
            <person name="Fujita K."/>
            <person name="Hayashi K."/>
            <person name="Honjo A."/>
            <person name="Ikemoto K."/>
            <person name="Inada T."/>
            <person name="Itoh T."/>
            <person name="Kajihara M."/>
            <person name="Kanai K."/>
            <person name="Kashimoto K."/>
            <person name="Kimura S."/>
            <person name="Kitagawa M."/>
            <person name="Makino K."/>
            <person name="Masuda S."/>
            <person name="Miki T."/>
            <person name="Mizobuchi K."/>
            <person name="Mori H."/>
            <person name="Motomura K."/>
            <person name="Nakamura Y."/>
            <person name="Nashimoto H."/>
            <person name="Nishio Y."/>
            <person name="Saito N."/>
            <person name="Sampei G."/>
            <person name="Seki Y."/>
            <person name="Tagami H."/>
            <person name="Takemoto K."/>
            <person name="Wada C."/>
            <person name="Yamamoto Y."/>
            <person name="Yano M."/>
            <person name="Horiuchi T."/>
        </authorList>
    </citation>
    <scope>NUCLEOTIDE SEQUENCE [LARGE SCALE GENOMIC DNA]</scope>
    <source>
        <strain>K12 / W3110 / ATCC 27325 / DSM 5911</strain>
    </source>
</reference>
<reference key="2">
    <citation type="journal article" date="1997" name="Science">
        <title>The complete genome sequence of Escherichia coli K-12.</title>
        <authorList>
            <person name="Blattner F.R."/>
            <person name="Plunkett G. III"/>
            <person name="Bloch C.A."/>
            <person name="Perna N.T."/>
            <person name="Burland V."/>
            <person name="Riley M."/>
            <person name="Collado-Vides J."/>
            <person name="Glasner J.D."/>
            <person name="Rode C.K."/>
            <person name="Mayhew G.F."/>
            <person name="Gregor J."/>
            <person name="Davis N.W."/>
            <person name="Kirkpatrick H.A."/>
            <person name="Goeden M.A."/>
            <person name="Rose D.J."/>
            <person name="Mau B."/>
            <person name="Shao Y."/>
        </authorList>
    </citation>
    <scope>NUCLEOTIDE SEQUENCE [LARGE SCALE GENOMIC DNA]</scope>
    <source>
        <strain>K12 / MG1655 / ATCC 47076</strain>
    </source>
</reference>
<reference key="3">
    <citation type="journal article" date="2006" name="Mol. Syst. Biol.">
        <title>Highly accurate genome sequences of Escherichia coli K-12 strains MG1655 and W3110.</title>
        <authorList>
            <person name="Hayashi K."/>
            <person name="Morooka N."/>
            <person name="Yamamoto Y."/>
            <person name="Fujita K."/>
            <person name="Isono K."/>
            <person name="Choi S."/>
            <person name="Ohtsubo E."/>
            <person name="Baba T."/>
            <person name="Wanner B.L."/>
            <person name="Mori H."/>
            <person name="Horiuchi T."/>
        </authorList>
    </citation>
    <scope>NUCLEOTIDE SEQUENCE [LARGE SCALE GENOMIC DNA]</scope>
    <source>
        <strain>K12 / W3110 / ATCC 27325 / DSM 5911</strain>
    </source>
</reference>
<reference key="4">
    <citation type="journal article" date="2005" name="Science">
        <title>Global topology analysis of the Escherichia coli inner membrane proteome.</title>
        <authorList>
            <person name="Daley D.O."/>
            <person name="Rapp M."/>
            <person name="Granseth E."/>
            <person name="Melen K."/>
            <person name="Drew D."/>
            <person name="von Heijne G."/>
        </authorList>
    </citation>
    <scope>TOPOLOGY [LARGE SCALE ANALYSIS]</scope>
    <source>
        <strain>K12 / MG1655 / ATCC 47076</strain>
    </source>
</reference>
<protein>
    <recommendedName>
        <fullName>Inner membrane protein YbhL</fullName>
    </recommendedName>
</protein>
<name>YBHL_ECOLI</name>
<organism>
    <name type="scientific">Escherichia coli (strain K12)</name>
    <dbReference type="NCBI Taxonomy" id="83333"/>
    <lineage>
        <taxon>Bacteria</taxon>
        <taxon>Pseudomonadati</taxon>
        <taxon>Pseudomonadota</taxon>
        <taxon>Gammaproteobacteria</taxon>
        <taxon>Enterobacterales</taxon>
        <taxon>Enterobacteriaceae</taxon>
        <taxon>Escherichia</taxon>
    </lineage>
</organism>
<gene>
    <name type="primary">ybhL</name>
    <name type="ordered locus">b0786</name>
    <name type="ordered locus">JW0769</name>
</gene>
<keyword id="KW-0997">Cell inner membrane</keyword>
<keyword id="KW-1003">Cell membrane</keyword>
<keyword id="KW-0472">Membrane</keyword>
<keyword id="KW-1185">Reference proteome</keyword>
<keyword id="KW-0812">Transmembrane</keyword>
<keyword id="KW-1133">Transmembrane helix</keyword>
<sequence length="234" mass="25902">MDRFPRSDSIVQPRAGLQTYMAQVYGWMTVGLLLTAFVAWYAANSAAVMELLFTNRVFLIGLIIAQLALVIVLSAMIQKLSAGVTTMLFMLYSALTGLTLSSIFIVYTAASIASTFVVTAGMFGAMSLYGYTTKRDLSGFGNMLFMALIGIVLASLVNFWLKSEALMWAVTYIGVIVFVGLTAYDTQKLKNMGEQIDTRDTSNLRKYSILGALTLYLDFINLFLMLLRIFGNRR</sequence>
<comment type="subcellular location">
    <subcellularLocation>
        <location>Cell inner membrane</location>
        <topology>Multi-pass membrane protein</topology>
    </subcellularLocation>
</comment>
<comment type="similarity">
    <text evidence="2">Belongs to the BI1 family.</text>
</comment>
<accession>P0AAC4</accession>
<accession>P75768</accession>
<dbReference type="EMBL" id="U00096">
    <property type="protein sequence ID" value="AAC73873.1"/>
    <property type="molecule type" value="Genomic_DNA"/>
</dbReference>
<dbReference type="EMBL" id="AP009048">
    <property type="protein sequence ID" value="BAA35444.1"/>
    <property type="molecule type" value="Genomic_DNA"/>
</dbReference>
<dbReference type="PIR" id="B64815">
    <property type="entry name" value="B64815"/>
</dbReference>
<dbReference type="RefSeq" id="NP_415307.1">
    <property type="nucleotide sequence ID" value="NC_000913.3"/>
</dbReference>
<dbReference type="RefSeq" id="WP_000373624.1">
    <property type="nucleotide sequence ID" value="NZ_STEB01000028.1"/>
</dbReference>
<dbReference type="SMR" id="P0AAC4"/>
<dbReference type="BioGRID" id="4262178">
    <property type="interactions" value="7"/>
</dbReference>
<dbReference type="FunCoup" id="P0AAC4">
    <property type="interactions" value="295"/>
</dbReference>
<dbReference type="STRING" id="511145.b0786"/>
<dbReference type="TCDB" id="1.A.14.2.2">
    <property type="family name" value="the calcium transporter a (cata) family (formerly the testis-enhanced gene transfer (tegt) family)"/>
</dbReference>
<dbReference type="jPOST" id="P0AAC4"/>
<dbReference type="PaxDb" id="511145-b0786"/>
<dbReference type="DNASU" id="945401"/>
<dbReference type="EnsemblBacteria" id="AAC73873">
    <property type="protein sequence ID" value="AAC73873"/>
    <property type="gene ID" value="b0786"/>
</dbReference>
<dbReference type="GeneID" id="945401"/>
<dbReference type="KEGG" id="ecj:JW0769"/>
<dbReference type="KEGG" id="eco:b0786"/>
<dbReference type="KEGG" id="ecoc:C3026_04980"/>
<dbReference type="PATRIC" id="fig|1411691.4.peg.1492"/>
<dbReference type="EchoBASE" id="EB3432"/>
<dbReference type="eggNOG" id="COG0670">
    <property type="taxonomic scope" value="Bacteria"/>
</dbReference>
<dbReference type="HOGENOM" id="CLU_058671_1_0_6"/>
<dbReference type="InParanoid" id="P0AAC4"/>
<dbReference type="OMA" id="FGVMSLY"/>
<dbReference type="OrthoDB" id="9793828at2"/>
<dbReference type="PhylomeDB" id="P0AAC4"/>
<dbReference type="BioCyc" id="EcoCyc:G6403-MONOMER"/>
<dbReference type="PRO" id="PR:P0AAC4"/>
<dbReference type="Proteomes" id="UP000000625">
    <property type="component" value="Chromosome"/>
</dbReference>
<dbReference type="GO" id="GO:0005886">
    <property type="term" value="C:plasma membrane"/>
    <property type="evidence" value="ECO:0000314"/>
    <property type="project" value="EcoCyc"/>
</dbReference>
<dbReference type="GO" id="GO:0005262">
    <property type="term" value="F:calcium channel activity"/>
    <property type="evidence" value="ECO:0000318"/>
    <property type="project" value="GO_Central"/>
</dbReference>
<dbReference type="GO" id="GO:0030162">
    <property type="term" value="P:regulation of proteolysis"/>
    <property type="evidence" value="ECO:0000318"/>
    <property type="project" value="GO_Central"/>
</dbReference>
<dbReference type="CDD" id="cd10432">
    <property type="entry name" value="BI-1-like_bacterial"/>
    <property type="match status" value="1"/>
</dbReference>
<dbReference type="InterPro" id="IPR006214">
    <property type="entry name" value="Bax_inhibitor_1-related"/>
</dbReference>
<dbReference type="PANTHER" id="PTHR23291">
    <property type="entry name" value="BAX INHIBITOR-RELATED"/>
    <property type="match status" value="1"/>
</dbReference>
<dbReference type="PANTHER" id="PTHR23291:SF50">
    <property type="entry name" value="PROTEIN LIFEGUARD 4"/>
    <property type="match status" value="1"/>
</dbReference>
<dbReference type="Pfam" id="PF01027">
    <property type="entry name" value="Bax1-I"/>
    <property type="match status" value="1"/>
</dbReference>
<feature type="chain" id="PRO_0000179100" description="Inner membrane protein YbhL">
    <location>
        <begin position="1"/>
        <end position="234"/>
    </location>
</feature>
<feature type="topological domain" description="Periplasmic" evidence="1">
    <location>
        <begin position="1"/>
        <end position="23"/>
    </location>
</feature>
<feature type="transmembrane region" description="Helical" evidence="1">
    <location>
        <begin position="24"/>
        <end position="44"/>
    </location>
</feature>
<feature type="topological domain" description="Cytoplasmic" evidence="1">
    <location>
        <begin position="45"/>
        <end position="56"/>
    </location>
</feature>
<feature type="transmembrane region" description="Helical" evidence="1">
    <location>
        <begin position="57"/>
        <end position="77"/>
    </location>
</feature>
<feature type="topological domain" description="Periplasmic" evidence="1">
    <location>
        <begin position="78"/>
        <end position="79"/>
    </location>
</feature>
<feature type="transmembrane region" description="Helical" evidence="1">
    <location>
        <begin position="80"/>
        <end position="100"/>
    </location>
</feature>
<feature type="topological domain" description="Cytoplasmic" evidence="1">
    <location>
        <begin position="101"/>
        <end position="102"/>
    </location>
</feature>
<feature type="transmembrane region" description="Helical" evidence="1">
    <location>
        <begin position="103"/>
        <end position="123"/>
    </location>
</feature>
<feature type="topological domain" description="Periplasmic" evidence="1">
    <location>
        <begin position="124"/>
        <end position="136"/>
    </location>
</feature>
<feature type="transmembrane region" description="Helical" evidence="1">
    <location>
        <begin position="137"/>
        <end position="157"/>
    </location>
</feature>
<feature type="topological domain" description="Cytoplasmic" evidence="1">
    <location>
        <begin position="158"/>
        <end position="163"/>
    </location>
</feature>
<feature type="transmembrane region" description="Helical" evidence="1">
    <location>
        <begin position="164"/>
        <end position="184"/>
    </location>
</feature>
<feature type="topological domain" description="Periplasmic" evidence="1">
    <location>
        <begin position="185"/>
        <end position="206"/>
    </location>
</feature>
<feature type="transmembrane region" description="Helical" evidence="1">
    <location>
        <begin position="207"/>
        <end position="227"/>
    </location>
</feature>
<feature type="topological domain" description="Cytoplasmic" evidence="1">
    <location>
        <begin position="228"/>
        <end position="234"/>
    </location>
</feature>
<evidence type="ECO:0000255" key="1"/>
<evidence type="ECO:0000305" key="2"/>
<proteinExistence type="evidence at protein level"/>